<accession>P0DKE4</accession>
<accession>A4GD53</accession>
<reference key="1">
    <citation type="journal article" date="2012" name="PLoS ONE">
        <title>Characterization of profilin polymorphism in pollen with a focus on multifunctionality.</title>
        <authorList>
            <person name="Jimenez-Lopez J.C."/>
            <person name="Morales S."/>
            <person name="Castro A.J."/>
            <person name="Volkmann D."/>
            <person name="Rodriguez-Garcia M.I."/>
            <person name="Alche Jde D."/>
        </authorList>
    </citation>
    <scope>NUCLEOTIDE SEQUENCE [MRNA]</scope>
    <scope>POLYMORPHISM</scope>
    <source>
        <strain>cv. Verdial de Huevar</strain>
    </source>
</reference>
<reference key="2">
    <citation type="journal article" date="2013" name="PLoS ONE">
        <title>Analysis of the effects of polymorphism on pollen profilin structural functionality and the generation of conformational, T- and B-cell epitopes.</title>
        <authorList>
            <person name="Jimenez-Lopez J.C."/>
            <person name="Rodriguez-Garcia M.I."/>
            <person name="Alche J.D."/>
        </authorList>
    </citation>
    <scope>3D-STRUCTURE MODELING</scope>
    <scope>DISULFIDE BOND</scope>
</reference>
<organism>
    <name type="scientific">Olea europaea</name>
    <name type="common">Common olive</name>
    <dbReference type="NCBI Taxonomy" id="4146"/>
    <lineage>
        <taxon>Eukaryota</taxon>
        <taxon>Viridiplantae</taxon>
        <taxon>Streptophyta</taxon>
        <taxon>Embryophyta</taxon>
        <taxon>Tracheophyta</taxon>
        <taxon>Spermatophyta</taxon>
        <taxon>Magnoliopsida</taxon>
        <taxon>eudicotyledons</taxon>
        <taxon>Gunneridae</taxon>
        <taxon>Pentapetalae</taxon>
        <taxon>asterids</taxon>
        <taxon>lamiids</taxon>
        <taxon>Lamiales</taxon>
        <taxon>Oleaceae</taxon>
        <taxon>Oleeae</taxon>
        <taxon>Olea</taxon>
    </lineage>
</organism>
<comment type="function">
    <text evidence="1">Binds to actin and affects the structure of the cytoskeleton. At high concentrations, profilin prevents the polymerization of actin, whereas it enhances it at low concentrations (By similarity).</text>
</comment>
<comment type="subunit">
    <text evidence="1">Occurs in many kinds of cells as a complex with monomeric actin in a 1:1 ratio.</text>
</comment>
<comment type="subcellular location">
    <subcellularLocation>
        <location evidence="1">Cytoplasm</location>
        <location evidence="1">Cytoskeleton</location>
    </subcellularLocation>
</comment>
<comment type="PTM">
    <text evidence="1">Phosphorylated by MAP kinases.</text>
</comment>
<comment type="polymorphism">
    <text>Several isoforms of the allergen exist due to polymorphism.</text>
</comment>
<comment type="allergen">
    <text>Causes an allergic reaction in human.</text>
</comment>
<comment type="miscellaneous">
    <text evidence="3">The variability of the residues taking part of IgE-binding epitopes might be responsible of the difference in cross-reactivity among olive pollen cultivars, and between distantly related pollen species, leading to a variable range of allergy reactions among atopic patients.</text>
</comment>
<comment type="similarity">
    <text evidence="2">Belongs to the profilin family.</text>
</comment>
<dbReference type="EMBL" id="DQ117905">
    <property type="protein sequence ID" value="AAZ30395.1"/>
    <property type="molecule type" value="mRNA"/>
</dbReference>
<dbReference type="SMR" id="P0DKE4"/>
<dbReference type="GO" id="GO:0005938">
    <property type="term" value="C:cell cortex"/>
    <property type="evidence" value="ECO:0007669"/>
    <property type="project" value="TreeGrafter"/>
</dbReference>
<dbReference type="GO" id="GO:0005856">
    <property type="term" value="C:cytoskeleton"/>
    <property type="evidence" value="ECO:0007669"/>
    <property type="project" value="UniProtKB-SubCell"/>
</dbReference>
<dbReference type="GO" id="GO:0003785">
    <property type="term" value="F:actin monomer binding"/>
    <property type="evidence" value="ECO:0007669"/>
    <property type="project" value="TreeGrafter"/>
</dbReference>
<dbReference type="CDD" id="cd00148">
    <property type="entry name" value="PROF"/>
    <property type="match status" value="1"/>
</dbReference>
<dbReference type="FunFam" id="3.30.450.30:FF:000001">
    <property type="entry name" value="Profilin"/>
    <property type="match status" value="1"/>
</dbReference>
<dbReference type="Gene3D" id="3.30.450.30">
    <property type="entry name" value="Dynein light chain 2a, cytoplasmic"/>
    <property type="match status" value="1"/>
</dbReference>
<dbReference type="InterPro" id="IPR048278">
    <property type="entry name" value="PFN"/>
</dbReference>
<dbReference type="InterPro" id="IPR005455">
    <property type="entry name" value="PFN_euk"/>
</dbReference>
<dbReference type="InterPro" id="IPR036140">
    <property type="entry name" value="PFN_sf"/>
</dbReference>
<dbReference type="InterPro" id="IPR027310">
    <property type="entry name" value="Profilin_CS"/>
</dbReference>
<dbReference type="PANTHER" id="PTHR11604">
    <property type="entry name" value="PROFILIN"/>
    <property type="match status" value="1"/>
</dbReference>
<dbReference type="PANTHER" id="PTHR11604:SF25">
    <property type="entry name" value="PROFILIN-5"/>
    <property type="match status" value="1"/>
</dbReference>
<dbReference type="Pfam" id="PF00235">
    <property type="entry name" value="Profilin"/>
    <property type="match status" value="1"/>
</dbReference>
<dbReference type="PRINTS" id="PR00392">
    <property type="entry name" value="PROFILIN"/>
</dbReference>
<dbReference type="PRINTS" id="PR01640">
    <property type="entry name" value="PROFILINPLNT"/>
</dbReference>
<dbReference type="SMART" id="SM00392">
    <property type="entry name" value="PROF"/>
    <property type="match status" value="1"/>
</dbReference>
<dbReference type="SUPFAM" id="SSF55770">
    <property type="entry name" value="Profilin (actin-binding protein)"/>
    <property type="match status" value="1"/>
</dbReference>
<dbReference type="PROSITE" id="PS00414">
    <property type="entry name" value="PROFILIN"/>
    <property type="match status" value="1"/>
</dbReference>
<name>PROFW_OLEEU</name>
<proteinExistence type="evidence at protein level"/>
<evidence type="ECO:0000250" key="1"/>
<evidence type="ECO:0000305" key="2"/>
<evidence type="ECO:0000305" key="3">
    <source>
    </source>
</evidence>
<sequence>MSWQAYVDDHLMCDIEGHEDHRLTAAAIVGHDGSVWAQSATFPQFKPEEMNGIMTDFNEPGHLAPTGLHLGGTKYMVIQGEAGAVIRGKKGSGGITIKKTGQALVFGIYEEPVTPGQCNMVVERLGDYLLEQGL</sequence>
<protein>
    <recommendedName>
        <fullName>Profilin-4</fullName>
    </recommendedName>
    <alternativeName>
        <fullName>Pollen allergen Ole e 2</fullName>
    </alternativeName>
    <allergenName>Ole e 2</allergenName>
</protein>
<keyword id="KW-0009">Actin-binding</keyword>
<keyword id="KW-0020">Allergen</keyword>
<keyword id="KW-0963">Cytoplasm</keyword>
<keyword id="KW-0206">Cytoskeleton</keyword>
<keyword id="KW-1015">Disulfide bond</keyword>
<keyword id="KW-0597">Phosphoprotein</keyword>
<feature type="initiator methionine" description="Removed" evidence="1">
    <location>
        <position position="1"/>
    </location>
</feature>
<feature type="chain" id="PRO_0000424988" description="Profilin-4">
    <location>
        <begin position="2"/>
        <end position="134"/>
    </location>
</feature>
<feature type="short sequence motif" description="Involved in PIP2 interaction">
    <location>
        <begin position="84"/>
        <end position="100"/>
    </location>
</feature>
<feature type="modified residue" description="Phosphothreonine" evidence="1">
    <location>
        <position position="114"/>
    </location>
</feature>
<feature type="disulfide bond" evidence="3">
    <location>
        <begin position="13"/>
        <end position="118"/>
    </location>
</feature>